<dbReference type="EMBL" id="CP000359">
    <property type="protein sequence ID" value="ABF44942.1"/>
    <property type="molecule type" value="Genomic_DNA"/>
</dbReference>
<dbReference type="RefSeq" id="WP_011529783.1">
    <property type="nucleotide sequence ID" value="NC_008025.1"/>
</dbReference>
<dbReference type="SMR" id="Q1J0P2"/>
<dbReference type="STRING" id="319795.Dgeo_0640"/>
<dbReference type="KEGG" id="dge:Dgeo_0640"/>
<dbReference type="eggNOG" id="COG0244">
    <property type="taxonomic scope" value="Bacteria"/>
</dbReference>
<dbReference type="HOGENOM" id="CLU_092227_1_2_0"/>
<dbReference type="Proteomes" id="UP000002431">
    <property type="component" value="Chromosome"/>
</dbReference>
<dbReference type="GO" id="GO:0015934">
    <property type="term" value="C:large ribosomal subunit"/>
    <property type="evidence" value="ECO:0007669"/>
    <property type="project" value="InterPro"/>
</dbReference>
<dbReference type="GO" id="GO:0070180">
    <property type="term" value="F:large ribosomal subunit rRNA binding"/>
    <property type="evidence" value="ECO:0007669"/>
    <property type="project" value="UniProtKB-UniRule"/>
</dbReference>
<dbReference type="GO" id="GO:0003735">
    <property type="term" value="F:structural constituent of ribosome"/>
    <property type="evidence" value="ECO:0007669"/>
    <property type="project" value="InterPro"/>
</dbReference>
<dbReference type="GO" id="GO:0006412">
    <property type="term" value="P:translation"/>
    <property type="evidence" value="ECO:0007669"/>
    <property type="project" value="UniProtKB-UniRule"/>
</dbReference>
<dbReference type="CDD" id="cd05797">
    <property type="entry name" value="Ribosomal_L10"/>
    <property type="match status" value="1"/>
</dbReference>
<dbReference type="Gene3D" id="3.30.70.1730">
    <property type="match status" value="1"/>
</dbReference>
<dbReference type="HAMAP" id="MF_00362">
    <property type="entry name" value="Ribosomal_uL10"/>
    <property type="match status" value="1"/>
</dbReference>
<dbReference type="InterPro" id="IPR001790">
    <property type="entry name" value="Ribosomal_uL10"/>
</dbReference>
<dbReference type="InterPro" id="IPR043141">
    <property type="entry name" value="Ribosomal_uL10-like_sf"/>
</dbReference>
<dbReference type="InterPro" id="IPR022973">
    <property type="entry name" value="Ribosomal_uL10_bac"/>
</dbReference>
<dbReference type="InterPro" id="IPR047865">
    <property type="entry name" value="Ribosomal_uL10_bac_type"/>
</dbReference>
<dbReference type="InterPro" id="IPR002363">
    <property type="entry name" value="Ribosomal_uL10_CS_bac"/>
</dbReference>
<dbReference type="NCBIfam" id="NF000955">
    <property type="entry name" value="PRK00099.1-1"/>
    <property type="match status" value="1"/>
</dbReference>
<dbReference type="PANTHER" id="PTHR11560">
    <property type="entry name" value="39S RIBOSOMAL PROTEIN L10, MITOCHONDRIAL"/>
    <property type="match status" value="1"/>
</dbReference>
<dbReference type="Pfam" id="PF00466">
    <property type="entry name" value="Ribosomal_L10"/>
    <property type="match status" value="1"/>
</dbReference>
<dbReference type="SUPFAM" id="SSF160369">
    <property type="entry name" value="Ribosomal protein L10-like"/>
    <property type="match status" value="1"/>
</dbReference>
<dbReference type="PROSITE" id="PS01109">
    <property type="entry name" value="RIBOSOMAL_L10"/>
    <property type="match status" value="1"/>
</dbReference>
<keyword id="KW-0687">Ribonucleoprotein</keyword>
<keyword id="KW-0689">Ribosomal protein</keyword>
<keyword id="KW-0694">RNA-binding</keyword>
<keyword id="KW-0699">rRNA-binding</keyword>
<feature type="chain" id="PRO_1000005490" description="Large ribosomal subunit protein uL10">
    <location>
        <begin position="1"/>
        <end position="169"/>
    </location>
</feature>
<comment type="function">
    <text evidence="1">Forms part of the ribosomal stalk, playing a central role in the interaction of the ribosome with GTP-bound translation factors.</text>
</comment>
<comment type="subunit">
    <text evidence="1">Part of the ribosomal stalk of the 50S ribosomal subunit. The N-terminus interacts with L11 and the large rRNA to form the base of the stalk. The C-terminus forms an elongated spine to which L12 dimers bind in a sequential fashion forming a multimeric L10(L12)X complex.</text>
</comment>
<comment type="similarity">
    <text evidence="1">Belongs to the universal ribosomal protein uL10 family.</text>
</comment>
<accession>Q1J0P2</accession>
<proteinExistence type="inferred from homology"/>
<protein>
    <recommendedName>
        <fullName evidence="1">Large ribosomal subunit protein uL10</fullName>
    </recommendedName>
    <alternativeName>
        <fullName evidence="2">50S ribosomal protein L10</fullName>
    </alternativeName>
</protein>
<reference key="1">
    <citation type="submission" date="2006-04" db="EMBL/GenBank/DDBJ databases">
        <title>Complete sequence of chromosome of Deinococcus geothermalis DSM 11300.</title>
        <authorList>
            <person name="Copeland A."/>
            <person name="Lucas S."/>
            <person name="Lapidus A."/>
            <person name="Barry K."/>
            <person name="Detter J.C."/>
            <person name="Glavina del Rio T."/>
            <person name="Hammon N."/>
            <person name="Israni S."/>
            <person name="Dalin E."/>
            <person name="Tice H."/>
            <person name="Pitluck S."/>
            <person name="Brettin T."/>
            <person name="Bruce D."/>
            <person name="Han C."/>
            <person name="Tapia R."/>
            <person name="Saunders E."/>
            <person name="Gilna P."/>
            <person name="Schmutz J."/>
            <person name="Larimer F."/>
            <person name="Land M."/>
            <person name="Hauser L."/>
            <person name="Kyrpides N."/>
            <person name="Kim E."/>
            <person name="Daly M.J."/>
            <person name="Fredrickson J.K."/>
            <person name="Makarova K.S."/>
            <person name="Gaidamakova E.K."/>
            <person name="Zhai M."/>
            <person name="Richardson P."/>
        </authorList>
    </citation>
    <scope>NUCLEOTIDE SEQUENCE [LARGE SCALE GENOMIC DNA]</scope>
    <source>
        <strain>DSM 11300 / CIP 105573 / AG-3a</strain>
    </source>
</reference>
<gene>
    <name evidence="1" type="primary">rplJ</name>
    <name type="ordered locus">Dgeo_0640</name>
</gene>
<organism>
    <name type="scientific">Deinococcus geothermalis (strain DSM 11300 / CIP 105573 / AG-3a)</name>
    <dbReference type="NCBI Taxonomy" id="319795"/>
    <lineage>
        <taxon>Bacteria</taxon>
        <taxon>Thermotogati</taxon>
        <taxon>Deinococcota</taxon>
        <taxon>Deinococci</taxon>
        <taxon>Deinococcales</taxon>
        <taxon>Deinococcaceae</taxon>
        <taxon>Deinococcus</taxon>
    </lineage>
</organism>
<name>RL10_DEIGD</name>
<evidence type="ECO:0000255" key="1">
    <source>
        <dbReference type="HAMAP-Rule" id="MF_00362"/>
    </source>
</evidence>
<evidence type="ECO:0000305" key="2"/>
<sequence length="169" mass="17704">MANERNQQNLTSLRGSLTGVETFYVVDYQGLTAGQLSQLRKNIREKGGQLIVAKNTLINLALQESGRDFSDALKGPSALVLAQEDPAGVAKALSDAAKGNDKGIPAIKGGFVEGNRVDVRVVERLASLGSKQSLQGELVGVLSAHLSNFVGILEAYRDKLGGGAAEAQG</sequence>